<feature type="chain" id="PRO_0000214780" description="Sodium- and chloride-dependent glycine transporter 1">
    <location>
        <begin position="1"/>
        <end position="706"/>
    </location>
</feature>
<feature type="topological domain" description="Cytoplasmic" evidence="3">
    <location>
        <begin position="1"/>
        <end position="108"/>
    </location>
</feature>
<feature type="transmembrane region" description="Helical; Name=1" evidence="3">
    <location>
        <begin position="109"/>
        <end position="129"/>
    </location>
</feature>
<feature type="transmembrane region" description="Helical; Name=2" evidence="3">
    <location>
        <begin position="136"/>
        <end position="156"/>
    </location>
</feature>
<feature type="transmembrane region" description="Helical; Name=3" evidence="3">
    <location>
        <begin position="188"/>
        <end position="208"/>
    </location>
</feature>
<feature type="topological domain" description="Extracellular" evidence="3">
    <location>
        <begin position="209"/>
        <end position="285"/>
    </location>
</feature>
<feature type="transmembrane region" description="Helical; Name=4" evidence="3">
    <location>
        <begin position="286"/>
        <end position="306"/>
    </location>
</feature>
<feature type="transmembrane region" description="Helical; Name=5" evidence="3">
    <location>
        <begin position="315"/>
        <end position="335"/>
    </location>
</feature>
<feature type="transmembrane region" description="Helical; Name=6" evidence="3">
    <location>
        <begin position="360"/>
        <end position="380"/>
    </location>
</feature>
<feature type="transmembrane region" description="Helical; Name=7" evidence="3">
    <location>
        <begin position="407"/>
        <end position="427"/>
    </location>
</feature>
<feature type="transmembrane region" description="Helical; Name=8" evidence="3">
    <location>
        <begin position="450"/>
        <end position="470"/>
    </location>
</feature>
<feature type="transmembrane region" description="Helical; Name=9" evidence="3">
    <location>
        <begin position="506"/>
        <end position="526"/>
    </location>
</feature>
<feature type="transmembrane region" description="Helical; Name=10" evidence="3">
    <location>
        <begin position="530"/>
        <end position="550"/>
    </location>
</feature>
<feature type="transmembrane region" description="Helical; Name=11" evidence="3">
    <location>
        <begin position="570"/>
        <end position="590"/>
    </location>
</feature>
<feature type="transmembrane region" description="Helical; Name=12" evidence="3">
    <location>
        <begin position="610"/>
        <end position="630"/>
    </location>
</feature>
<feature type="topological domain" description="Cytoplasmic" evidence="3">
    <location>
        <begin position="631"/>
        <end position="706"/>
    </location>
</feature>
<feature type="region of interest" description="Disordered" evidence="4">
    <location>
        <begin position="1"/>
        <end position="26"/>
    </location>
</feature>
<feature type="region of interest" description="Essential for interaction with EXOC1" evidence="2">
    <location>
        <begin position="695"/>
        <end position="706"/>
    </location>
</feature>
<feature type="compositionally biased region" description="Low complexity" evidence="4">
    <location>
        <begin position="7"/>
        <end position="18"/>
    </location>
</feature>
<feature type="modified residue" description="Phosphoserine" evidence="1">
    <location>
        <position position="673"/>
    </location>
</feature>
<feature type="modified residue" description="Phosphoserine" evidence="10">
    <location>
        <position position="698"/>
    </location>
</feature>
<feature type="splice variant" id="VSP_006270" description="In isoform GlyT-1A." evidence="8">
    <original>MSGGDTRAAIARPRMAAAHGPVAPSSPEQVTLLPVQRSFFLPPFSGATPSTSLAESVLKVWHGAYNSGLLPQLMAQHSLAMAQ</original>
    <variation>MVGKGAKGML</variation>
    <location>
        <begin position="1"/>
        <end position="83"/>
    </location>
</feature>
<feature type="splice variant" id="VSP_006271" description="In isoform GlyT-1B." evidence="8">
    <location>
        <begin position="29"/>
        <end position="82"/>
    </location>
</feature>
<feature type="sequence variant" id="VAR_078074" description="In GCENSG; dbSNP:rs1057519313." evidence="5">
    <original>S</original>
    <variation>G</variation>
    <location>
        <position position="407"/>
    </location>
</feature>
<feature type="sequence conflict" description="In Ref. 1; AAB30784/AAB30785." evidence="9" ref="1">
    <original>G</original>
    <variation>A</variation>
    <location>
        <position position="373"/>
    </location>
</feature>
<feature type="sequence conflict" description="In Ref. 1; AAB30784/AAB30785." evidence="9" ref="1">
    <original>P</original>
    <variation>S</variation>
    <location>
        <position position="682"/>
    </location>
</feature>
<feature type="turn" evidence="11">
    <location>
        <begin position="103"/>
        <end position="105"/>
    </location>
</feature>
<feature type="helix" evidence="12">
    <location>
        <begin position="106"/>
        <end position="117"/>
    </location>
</feature>
<feature type="helix" evidence="12">
    <location>
        <begin position="120"/>
        <end position="123"/>
    </location>
</feature>
<feature type="helix" evidence="12">
    <location>
        <begin position="125"/>
        <end position="132"/>
    </location>
</feature>
<feature type="helix" evidence="12">
    <location>
        <begin position="135"/>
        <end position="137"/>
    </location>
</feature>
<feature type="helix" evidence="12">
    <location>
        <begin position="139"/>
        <end position="148"/>
    </location>
</feature>
<feature type="helix" evidence="12">
    <location>
        <begin position="150"/>
        <end position="164"/>
    </location>
</feature>
<feature type="helix" evidence="12">
    <location>
        <begin position="170"/>
        <end position="173"/>
    </location>
</feature>
<feature type="helix" evidence="12">
    <location>
        <begin position="176"/>
        <end position="179"/>
    </location>
</feature>
<feature type="helix" evidence="12">
    <location>
        <begin position="180"/>
        <end position="209"/>
    </location>
</feature>
<feature type="strand" evidence="12">
    <location>
        <begin position="212"/>
        <end position="214"/>
    </location>
</feature>
<feature type="strand" evidence="14">
    <location>
        <begin position="218"/>
        <end position="220"/>
    </location>
</feature>
<feature type="strand" evidence="15">
    <location>
        <begin position="258"/>
        <end position="260"/>
    </location>
</feature>
<feature type="helix" evidence="12">
    <location>
        <begin position="264"/>
        <end position="271"/>
    </location>
</feature>
<feature type="strand" evidence="15">
    <location>
        <begin position="278"/>
        <end position="281"/>
    </location>
</feature>
<feature type="helix" evidence="12">
    <location>
        <begin position="288"/>
        <end position="306"/>
    </location>
</feature>
<feature type="helix" evidence="12">
    <location>
        <begin position="309"/>
        <end position="311"/>
    </location>
</feature>
<feature type="helix" evidence="12">
    <location>
        <begin position="313"/>
        <end position="319"/>
    </location>
</feature>
<feature type="helix" evidence="12">
    <location>
        <begin position="322"/>
        <end position="334"/>
    </location>
</feature>
<feature type="strand" evidence="15">
    <location>
        <begin position="335"/>
        <end position="339"/>
    </location>
</feature>
<feature type="helix" evidence="12">
    <location>
        <begin position="340"/>
        <end position="348"/>
    </location>
</feature>
<feature type="strand" evidence="12">
    <location>
        <begin position="354"/>
        <end position="357"/>
    </location>
</feature>
<feature type="helix" evidence="12">
    <location>
        <begin position="358"/>
        <end position="372"/>
    </location>
</feature>
<feature type="strand" evidence="15">
    <location>
        <begin position="375"/>
        <end position="377"/>
    </location>
</feature>
<feature type="helix" evidence="12">
    <location>
        <begin position="378"/>
        <end position="383"/>
    </location>
</feature>
<feature type="helix" evidence="12">
    <location>
        <begin position="392"/>
        <end position="425"/>
    </location>
</feature>
<feature type="strand" evidence="12">
    <location>
        <begin position="429"/>
        <end position="433"/>
    </location>
</feature>
<feature type="strand" evidence="13">
    <location>
        <begin position="435"/>
        <end position="437"/>
    </location>
</feature>
<feature type="helix" evidence="12">
    <location>
        <begin position="439"/>
        <end position="448"/>
    </location>
</feature>
<feature type="strand" evidence="14">
    <location>
        <begin position="451"/>
        <end position="453"/>
    </location>
</feature>
<feature type="helix" evidence="12">
    <location>
        <begin position="454"/>
        <end position="488"/>
    </location>
</feature>
<feature type="helix" evidence="12">
    <location>
        <begin position="491"/>
        <end position="494"/>
    </location>
</feature>
<feature type="helix" evidence="12">
    <location>
        <begin position="497"/>
        <end position="512"/>
    </location>
</feature>
<feature type="helix" evidence="12">
    <location>
        <begin position="513"/>
        <end position="516"/>
    </location>
</feature>
<feature type="helix" evidence="12">
    <location>
        <begin position="520"/>
        <end position="530"/>
    </location>
</feature>
<feature type="turn" evidence="15">
    <location>
        <begin position="531"/>
        <end position="533"/>
    </location>
</feature>
<feature type="helix" evidence="12">
    <location>
        <begin position="535"/>
        <end position="549"/>
    </location>
</feature>
<feature type="turn" evidence="12">
    <location>
        <begin position="550"/>
        <end position="552"/>
    </location>
</feature>
<feature type="helix" evidence="12">
    <location>
        <begin position="553"/>
        <end position="564"/>
    </location>
</feature>
<feature type="helix" evidence="12">
    <location>
        <begin position="570"/>
        <end position="593"/>
    </location>
</feature>
<feature type="helix" evidence="13">
    <location>
        <begin position="598"/>
        <end position="600"/>
    </location>
</feature>
<feature type="helix" evidence="12">
    <location>
        <begin position="607"/>
        <end position="621"/>
    </location>
</feature>
<feature type="helix" evidence="12">
    <location>
        <begin position="623"/>
        <end position="632"/>
    </location>
</feature>
<feature type="turn" evidence="15">
    <location>
        <begin position="633"/>
        <end position="636"/>
    </location>
</feature>
<feature type="helix" evidence="12">
    <location>
        <begin position="640"/>
        <end position="648"/>
    </location>
</feature>
<feature type="strand" evidence="11">
    <location>
        <begin position="655"/>
        <end position="657"/>
    </location>
</feature>
<feature type="helix" evidence="12">
    <location>
        <begin position="659"/>
        <end position="661"/>
    </location>
</feature>
<feature type="turn" evidence="15">
    <location>
        <begin position="663"/>
        <end position="665"/>
    </location>
</feature>
<protein>
    <recommendedName>
        <fullName>Sodium- and chloride-dependent glycine transporter 1</fullName>
        <shortName>GlyT-1</shortName>
        <shortName>GlyT1</shortName>
    </recommendedName>
    <alternativeName>
        <fullName>Solute carrier family 6 member 9</fullName>
    </alternativeName>
</protein>
<organism>
    <name type="scientific">Homo sapiens</name>
    <name type="common">Human</name>
    <dbReference type="NCBI Taxonomy" id="9606"/>
    <lineage>
        <taxon>Eukaryota</taxon>
        <taxon>Metazoa</taxon>
        <taxon>Chordata</taxon>
        <taxon>Craniata</taxon>
        <taxon>Vertebrata</taxon>
        <taxon>Euteleostomi</taxon>
        <taxon>Mammalia</taxon>
        <taxon>Eutheria</taxon>
        <taxon>Euarchontoglires</taxon>
        <taxon>Primates</taxon>
        <taxon>Haplorrhini</taxon>
        <taxon>Catarrhini</taxon>
        <taxon>Hominidae</taxon>
        <taxon>Homo</taxon>
    </lineage>
</organism>
<sequence>MSGGDTRAAIARPRMAAAHGPVAPSSPEQVTLLPVQRSFFLPPFSGATPSTSLAESVLKVWHGAYNSGLLPQLMAQHSLAMAQNGAVPSEATKRDQNLKRGNWGNQIEFVLTSVGYAVGLGNVWRFPYLCYRNGGGAFMFPYFIMLIFCGIPLFFMELSFGQFASQGCLGVWRISPMFKGVGYGMMVVSTYIGIYYNVVICIAFYYFFSSMTHVLPWAYCNNPWNTHDCAGVLDASNLTNGSRPAALPSNLSHLLNHSLQRTSPSEEYWRLYVLKLSDDIGNFGEVRLPLLGCLGVSWLVVFLCLIRGVKSSGKVVYFTATFPYVVLTILFVRGVTLEGAFDGIMYYLTPQWDKILEAKVWGDAASQIFYSLGCAWGGLITMASYNKFHNNCYRDSVIISITNCATSVYAGFVIFSILGFMANHLGVDVSRVADHGPGLAFVAYPEALTLLPISPLWSLLFFFMLILLGLGTQFCLLETLVTAIVDEVGNEWILQKKTYVTLGVAVAGFLLGIPLTSQAGIYWLLLMDNYAASFSLVVISCIMCVAIMYIYGHRNYFQDIQMMLGFPPPLFFQICWRFVSPAIIFFILVFTVIQYQPITYNHYQYPGWAVAIGFLMALSSVLCIPLYAMFRLCRTDGDTLLQRLKNATKPSRDWGPALLEHRTGRYAPTIAPSPEDGFEVQPLHPDKAQIPIVGSNGSSRLQDSRI</sequence>
<gene>
    <name type="primary">SLC6A9</name>
</gene>
<proteinExistence type="evidence at protein level"/>
<dbReference type="EMBL" id="S70609">
    <property type="protein sequence ID" value="AAB30784.1"/>
    <property type="status" value="ALT_FRAME"/>
    <property type="molecule type" value="mRNA"/>
</dbReference>
<dbReference type="EMBL" id="S70612">
    <property type="protein sequence ID" value="AAB30785.1"/>
    <property type="status" value="ALT_FRAME"/>
    <property type="molecule type" value="mRNA"/>
</dbReference>
<dbReference type="EMBL" id="AL139220">
    <property type="status" value="NOT_ANNOTATED_CDS"/>
    <property type="molecule type" value="Genomic_DNA"/>
</dbReference>
<dbReference type="EMBL" id="CH471059">
    <property type="protein sequence ID" value="EAX07056.1"/>
    <property type="molecule type" value="Genomic_DNA"/>
</dbReference>
<dbReference type="EMBL" id="CH471059">
    <property type="protein sequence ID" value="EAX07057.1"/>
    <property type="molecule type" value="Genomic_DNA"/>
</dbReference>
<dbReference type="CCDS" id="CCDS30695.1">
    <molecule id="P48067-2"/>
</dbReference>
<dbReference type="CCDS" id="CCDS41316.1">
    <molecule id="P48067-3"/>
</dbReference>
<dbReference type="CCDS" id="CCDS41317.1">
    <molecule id="P48067-1"/>
</dbReference>
<dbReference type="PIR" id="I57956">
    <property type="entry name" value="I57956"/>
</dbReference>
<dbReference type="PIR" id="I77912">
    <property type="entry name" value="I77912"/>
</dbReference>
<dbReference type="RefSeq" id="NP_001020016.1">
    <molecule id="P48067-2"/>
    <property type="nucleotide sequence ID" value="NM_001024845.3"/>
</dbReference>
<dbReference type="RefSeq" id="NP_001315558.1">
    <molecule id="P48067-2"/>
    <property type="nucleotide sequence ID" value="NM_001328629.1"/>
</dbReference>
<dbReference type="RefSeq" id="NP_008865.2">
    <molecule id="P48067-3"/>
    <property type="nucleotide sequence ID" value="NM_006934.4"/>
</dbReference>
<dbReference type="RefSeq" id="NP_964012.2">
    <molecule id="P48067-1"/>
    <property type="nucleotide sequence ID" value="NM_201649.4"/>
</dbReference>
<dbReference type="RefSeq" id="XP_047284696.1">
    <molecule id="P48067-2"/>
    <property type="nucleotide sequence ID" value="XM_047428740.1"/>
</dbReference>
<dbReference type="RefSeq" id="XP_054194413.1">
    <molecule id="P48067-2"/>
    <property type="nucleotide sequence ID" value="XM_054338438.1"/>
</dbReference>
<dbReference type="PDB" id="6ZBV">
    <property type="method" value="X-ray"/>
    <property type="resolution" value="3.40 A"/>
    <property type="chains" value="A=91-684"/>
</dbReference>
<dbReference type="PDB" id="6ZPL">
    <property type="method" value="X-ray"/>
    <property type="resolution" value="3.94 A"/>
    <property type="chains" value="A/B=92-684"/>
</dbReference>
<dbReference type="PDB" id="8WFI">
    <property type="method" value="EM"/>
    <property type="resolution" value="2.58 A"/>
    <property type="chains" value="A=100-668"/>
</dbReference>
<dbReference type="PDB" id="8WFJ">
    <property type="method" value="EM"/>
    <property type="resolution" value="3.35 A"/>
    <property type="chains" value="A=1-706"/>
</dbReference>
<dbReference type="PDB" id="8WFK">
    <property type="method" value="EM"/>
    <property type="resolution" value="3.22 A"/>
    <property type="chains" value="A=1-706"/>
</dbReference>
<dbReference type="PDB" id="8WFL">
    <property type="method" value="EM"/>
    <property type="resolution" value="3.03 A"/>
    <property type="chains" value="A=1-706"/>
</dbReference>
<dbReference type="PDB" id="9J8B">
    <property type="method" value="EM"/>
    <property type="resolution" value="3.90 A"/>
    <property type="chains" value="A=1-706"/>
</dbReference>
<dbReference type="PDB" id="9J8C">
    <property type="method" value="EM"/>
    <property type="resolution" value="2.90 A"/>
    <property type="chains" value="A=1-706"/>
</dbReference>
<dbReference type="PDB" id="9J8D">
    <property type="method" value="EM"/>
    <property type="resolution" value="3.00 A"/>
    <property type="chains" value="A=1-706"/>
</dbReference>
<dbReference type="PDBsum" id="6ZBV"/>
<dbReference type="PDBsum" id="6ZPL"/>
<dbReference type="PDBsum" id="8WFI"/>
<dbReference type="PDBsum" id="8WFJ"/>
<dbReference type="PDBsum" id="8WFK"/>
<dbReference type="PDBsum" id="8WFL"/>
<dbReference type="PDBsum" id="9J8B"/>
<dbReference type="PDBsum" id="9J8C"/>
<dbReference type="PDBsum" id="9J8D"/>
<dbReference type="EMDB" id="EMD-37492"/>
<dbReference type="EMDB" id="EMD-37493"/>
<dbReference type="EMDB" id="EMD-37494"/>
<dbReference type="EMDB" id="EMD-37495"/>
<dbReference type="EMDB" id="EMD-61226"/>
<dbReference type="EMDB" id="EMD-61227"/>
<dbReference type="EMDB" id="EMD-61228"/>
<dbReference type="SMR" id="P48067"/>
<dbReference type="BioGRID" id="112427">
    <property type="interactions" value="15"/>
</dbReference>
<dbReference type="FunCoup" id="P48067">
    <property type="interactions" value="336"/>
</dbReference>
<dbReference type="IntAct" id="P48067">
    <property type="interactions" value="11"/>
</dbReference>
<dbReference type="MINT" id="P48067"/>
<dbReference type="STRING" id="9606.ENSP00000353791"/>
<dbReference type="BindingDB" id="P48067"/>
<dbReference type="ChEMBL" id="CHEMBL2337"/>
<dbReference type="DrugBank" id="DB01431">
    <property type="generic name" value="Allylestrenol"/>
</dbReference>
<dbReference type="DrugBank" id="DB00145">
    <property type="generic name" value="Glycine"/>
</dbReference>
<dbReference type="DrugBank" id="DB19058">
    <property type="generic name" value="Iclepertin"/>
</dbReference>
<dbReference type="DrugBank" id="DB12220">
    <property type="generic name" value="ORG-25935"/>
</dbReference>
<dbReference type="DrugBank" id="DB11993">
    <property type="generic name" value="PF-03463275"/>
</dbReference>
<dbReference type="DrugCentral" id="P48067"/>
<dbReference type="GuidetoPHARMACOLOGY" id="935"/>
<dbReference type="TCDB" id="2.A.22.2.12">
    <property type="family name" value="the neurotransmitter:sodium symporter (nss) family"/>
</dbReference>
<dbReference type="GlyGen" id="P48067">
    <property type="glycosylation" value="3 sites, 2 N-linked glycans (2 sites)"/>
</dbReference>
<dbReference type="iPTMnet" id="P48067"/>
<dbReference type="PhosphoSitePlus" id="P48067"/>
<dbReference type="SwissPalm" id="P48067"/>
<dbReference type="BioMuta" id="SLC6A9"/>
<dbReference type="DMDM" id="302393807"/>
<dbReference type="jPOST" id="P48067"/>
<dbReference type="MassIVE" id="P48067"/>
<dbReference type="PaxDb" id="9606-ENSP00000353791"/>
<dbReference type="PeptideAtlas" id="P48067"/>
<dbReference type="ProteomicsDB" id="55861">
    <molecule id="P48067-1"/>
</dbReference>
<dbReference type="ProteomicsDB" id="55862">
    <molecule id="P48067-2"/>
</dbReference>
<dbReference type="ProteomicsDB" id="55863">
    <molecule id="P48067-3"/>
</dbReference>
<dbReference type="Pumba" id="P48067"/>
<dbReference type="ABCD" id="P48067">
    <property type="antibodies" value="1 sequenced antibody"/>
</dbReference>
<dbReference type="Antibodypedia" id="2813">
    <property type="antibodies" value="71 antibodies from 13 providers"/>
</dbReference>
<dbReference type="DNASU" id="6536"/>
<dbReference type="Ensembl" id="ENST00000357730.6">
    <molecule id="P48067-3"/>
    <property type="protein sequence ID" value="ENSP00000350362.2"/>
    <property type="gene ID" value="ENSG00000196517.13"/>
</dbReference>
<dbReference type="Ensembl" id="ENST00000360584.6">
    <molecule id="P48067-1"/>
    <property type="protein sequence ID" value="ENSP00000353791.2"/>
    <property type="gene ID" value="ENSG00000196517.13"/>
</dbReference>
<dbReference type="Ensembl" id="ENST00000372310.8">
    <molecule id="P48067-2"/>
    <property type="protein sequence ID" value="ENSP00000361384.4"/>
    <property type="gene ID" value="ENSG00000196517.13"/>
</dbReference>
<dbReference type="Ensembl" id="ENST00000673836.1">
    <molecule id="P48067-2"/>
    <property type="protein sequence ID" value="ENSP00000501314.1"/>
    <property type="gene ID" value="ENSG00000196517.13"/>
</dbReference>
<dbReference type="GeneID" id="6536"/>
<dbReference type="KEGG" id="hsa:6536"/>
<dbReference type="MANE-Select" id="ENST00000372310.8">
    <molecule id="P48067-2"/>
    <property type="protein sequence ID" value="ENSP00000361384.4"/>
    <property type="RefSeq nucleotide sequence ID" value="NM_001024845.3"/>
    <property type="RefSeq protein sequence ID" value="NP_001020016.1"/>
</dbReference>
<dbReference type="UCSC" id="uc001cll.5">
    <molecule id="P48067-1"/>
    <property type="organism name" value="human"/>
</dbReference>
<dbReference type="AGR" id="HGNC:11056"/>
<dbReference type="CTD" id="6536"/>
<dbReference type="DisGeNET" id="6536"/>
<dbReference type="GeneCards" id="SLC6A9"/>
<dbReference type="GeneReviews" id="SLC6A9"/>
<dbReference type="HGNC" id="HGNC:11056">
    <property type="gene designation" value="SLC6A9"/>
</dbReference>
<dbReference type="HPA" id="ENSG00000196517">
    <property type="expression patterns" value="Tissue enhanced (brain, skin)"/>
</dbReference>
<dbReference type="MalaCards" id="SLC6A9"/>
<dbReference type="MIM" id="601019">
    <property type="type" value="gene"/>
</dbReference>
<dbReference type="MIM" id="617301">
    <property type="type" value="phenotype"/>
</dbReference>
<dbReference type="neXtProt" id="NX_P48067"/>
<dbReference type="OpenTargets" id="ENSG00000196517"/>
<dbReference type="Orphanet" id="289863">
    <property type="disease" value="Atypical glycine encephalopathy"/>
</dbReference>
<dbReference type="Orphanet" id="289860">
    <property type="disease" value="Infantile glycine encephalopathy"/>
</dbReference>
<dbReference type="PharmGKB" id="PA35916"/>
<dbReference type="VEuPathDB" id="HostDB:ENSG00000196517"/>
<dbReference type="eggNOG" id="KOG3660">
    <property type="taxonomic scope" value="Eukaryota"/>
</dbReference>
<dbReference type="GeneTree" id="ENSGT00940000157263"/>
<dbReference type="HOGENOM" id="CLU_006855_9_5_1"/>
<dbReference type="InParanoid" id="P48067"/>
<dbReference type="OMA" id="QHNGVQI"/>
<dbReference type="OrthoDB" id="6581954at2759"/>
<dbReference type="PAN-GO" id="P48067">
    <property type="GO annotations" value="2 GO annotations based on evolutionary models"/>
</dbReference>
<dbReference type="PhylomeDB" id="P48067"/>
<dbReference type="TreeFam" id="TF343812"/>
<dbReference type="PathwayCommons" id="P48067"/>
<dbReference type="Reactome" id="R-HSA-442660">
    <property type="pathway name" value="Na+/Cl- dependent neurotransmitter transporters"/>
</dbReference>
<dbReference type="SignaLink" id="P48067"/>
<dbReference type="SIGNOR" id="P48067"/>
<dbReference type="BioGRID-ORCS" id="6536">
    <property type="hits" value="24 hits in 1166 CRISPR screens"/>
</dbReference>
<dbReference type="ChiTaRS" id="SLC6A9">
    <property type="organism name" value="human"/>
</dbReference>
<dbReference type="GeneWiki" id="Glycine_transporter_1"/>
<dbReference type="GenomeRNAi" id="6536"/>
<dbReference type="Pharos" id="P48067">
    <property type="development level" value="Tchem"/>
</dbReference>
<dbReference type="PRO" id="PR:P48067"/>
<dbReference type="Proteomes" id="UP000005640">
    <property type="component" value="Chromosome 1"/>
</dbReference>
<dbReference type="RNAct" id="P48067">
    <property type="molecule type" value="protein"/>
</dbReference>
<dbReference type="Bgee" id="ENSG00000196517">
    <property type="expression patterns" value="Expressed in C1 segment of cervical spinal cord and 106 other cell types or tissues"/>
</dbReference>
<dbReference type="ExpressionAtlas" id="P48067">
    <property type="expression patterns" value="baseline and differential"/>
</dbReference>
<dbReference type="GO" id="GO:0016324">
    <property type="term" value="C:apical plasma membrane"/>
    <property type="evidence" value="ECO:0000314"/>
    <property type="project" value="ARUK-UCL"/>
</dbReference>
<dbReference type="GO" id="GO:0009925">
    <property type="term" value="C:basal plasma membrane"/>
    <property type="evidence" value="ECO:0000314"/>
    <property type="project" value="ARUK-UCL"/>
</dbReference>
<dbReference type="GO" id="GO:0016323">
    <property type="term" value="C:basolateral plasma membrane"/>
    <property type="evidence" value="ECO:0000314"/>
    <property type="project" value="ARUK-UCL"/>
</dbReference>
<dbReference type="GO" id="GO:0031045">
    <property type="term" value="C:dense core granule"/>
    <property type="evidence" value="ECO:0000250"/>
    <property type="project" value="ARUK-UCL"/>
</dbReference>
<dbReference type="GO" id="GO:0005768">
    <property type="term" value="C:endosome"/>
    <property type="evidence" value="ECO:0000250"/>
    <property type="project" value="ARUK-UCL"/>
</dbReference>
<dbReference type="GO" id="GO:0098686">
    <property type="term" value="C:hippocampal mossy fiber to CA3 synapse"/>
    <property type="evidence" value="ECO:0007669"/>
    <property type="project" value="Ensembl"/>
</dbReference>
<dbReference type="GO" id="GO:0016328">
    <property type="term" value="C:lateral plasma membrane"/>
    <property type="evidence" value="ECO:0000314"/>
    <property type="project" value="ARUK-UCL"/>
</dbReference>
<dbReference type="GO" id="GO:0016020">
    <property type="term" value="C:membrane"/>
    <property type="evidence" value="ECO:0000304"/>
    <property type="project" value="ProtInc"/>
</dbReference>
<dbReference type="GO" id="GO:0098688">
    <property type="term" value="C:parallel fiber to Purkinje cell synapse"/>
    <property type="evidence" value="ECO:0007669"/>
    <property type="project" value="Ensembl"/>
</dbReference>
<dbReference type="GO" id="GO:0005886">
    <property type="term" value="C:plasma membrane"/>
    <property type="evidence" value="ECO:0000250"/>
    <property type="project" value="UniProtKB"/>
</dbReference>
<dbReference type="GO" id="GO:0014069">
    <property type="term" value="C:postsynaptic density"/>
    <property type="evidence" value="ECO:0007669"/>
    <property type="project" value="Ensembl"/>
</dbReference>
<dbReference type="GO" id="GO:0045211">
    <property type="term" value="C:postsynaptic membrane"/>
    <property type="evidence" value="ECO:0007669"/>
    <property type="project" value="Ensembl"/>
</dbReference>
<dbReference type="GO" id="GO:0042734">
    <property type="term" value="C:presynaptic membrane"/>
    <property type="evidence" value="ECO:0007669"/>
    <property type="project" value="Ensembl"/>
</dbReference>
<dbReference type="GO" id="GO:0030672">
    <property type="term" value="C:synaptic vesicle membrane"/>
    <property type="evidence" value="ECO:0007669"/>
    <property type="project" value="Ensembl"/>
</dbReference>
<dbReference type="GO" id="GO:0005283">
    <property type="term" value="F:amino acid:sodium symporter activity"/>
    <property type="evidence" value="ECO:0000318"/>
    <property type="project" value="GO_Central"/>
</dbReference>
<dbReference type="GO" id="GO:0015187">
    <property type="term" value="F:glycine transmembrane transporter activity"/>
    <property type="evidence" value="ECO:0000250"/>
    <property type="project" value="ARUK-UCL"/>
</dbReference>
<dbReference type="GO" id="GO:0015375">
    <property type="term" value="F:glycine:sodium symporter activity"/>
    <property type="evidence" value="ECO:0000314"/>
    <property type="project" value="UniProtKB"/>
</dbReference>
<dbReference type="GO" id="GO:1903804">
    <property type="term" value="P:glycine import across plasma membrane"/>
    <property type="evidence" value="ECO:0000250"/>
    <property type="project" value="ARUK-UCL"/>
</dbReference>
<dbReference type="GO" id="GO:0061537">
    <property type="term" value="P:glycine secretion, neurotransmission"/>
    <property type="evidence" value="ECO:0007669"/>
    <property type="project" value="Ensembl"/>
</dbReference>
<dbReference type="GO" id="GO:0015816">
    <property type="term" value="P:glycine transport"/>
    <property type="evidence" value="ECO:0000250"/>
    <property type="project" value="ARUK-UCL"/>
</dbReference>
<dbReference type="GO" id="GO:0001504">
    <property type="term" value="P:neurotransmitter uptake"/>
    <property type="evidence" value="ECO:0007669"/>
    <property type="project" value="Ensembl"/>
</dbReference>
<dbReference type="GO" id="GO:0070455">
    <property type="term" value="P:positive regulation of heme biosynthetic process"/>
    <property type="evidence" value="ECO:0000250"/>
    <property type="project" value="ARUK-UCL"/>
</dbReference>
<dbReference type="GO" id="GO:0046985">
    <property type="term" value="P:positive regulation of hemoglobin biosynthetic process"/>
    <property type="evidence" value="ECO:0000250"/>
    <property type="project" value="ARUK-UCL"/>
</dbReference>
<dbReference type="GO" id="GO:0060092">
    <property type="term" value="P:regulation of synaptic transmission, glycinergic"/>
    <property type="evidence" value="ECO:0000250"/>
    <property type="project" value="UniProtKB"/>
</dbReference>
<dbReference type="GO" id="GO:0035725">
    <property type="term" value="P:sodium ion transmembrane transport"/>
    <property type="evidence" value="ECO:0000318"/>
    <property type="project" value="GO_Central"/>
</dbReference>
<dbReference type="GO" id="GO:0150104">
    <property type="term" value="P:transport across blood-brain barrier"/>
    <property type="evidence" value="ECO:0000303"/>
    <property type="project" value="ARUK-UCL"/>
</dbReference>
<dbReference type="CDD" id="cd11498">
    <property type="entry name" value="SLC6sbd_GlyT1"/>
    <property type="match status" value="1"/>
</dbReference>
<dbReference type="InterPro" id="IPR000175">
    <property type="entry name" value="Na/ntran_symport"/>
</dbReference>
<dbReference type="InterPro" id="IPR003028">
    <property type="entry name" value="Na/ntran_symport_glycine_GLY1"/>
</dbReference>
<dbReference type="InterPro" id="IPR037272">
    <property type="entry name" value="SNS_sf"/>
</dbReference>
<dbReference type="PANTHER" id="PTHR11616:SF263">
    <property type="entry name" value="SODIUM- AND CHLORIDE-DEPENDENT GLYCINE TRANSPORTER 1"/>
    <property type="match status" value="1"/>
</dbReference>
<dbReference type="PANTHER" id="PTHR11616">
    <property type="entry name" value="SODIUM/CHLORIDE DEPENDENT TRANSPORTER"/>
    <property type="match status" value="1"/>
</dbReference>
<dbReference type="Pfam" id="PF00209">
    <property type="entry name" value="SNF"/>
    <property type="match status" value="1"/>
</dbReference>
<dbReference type="PRINTS" id="PR01204">
    <property type="entry name" value="GLY1TRNSPORT"/>
</dbReference>
<dbReference type="PRINTS" id="PR00176">
    <property type="entry name" value="NANEUSMPORT"/>
</dbReference>
<dbReference type="SUPFAM" id="SSF161070">
    <property type="entry name" value="SNF-like"/>
    <property type="match status" value="1"/>
</dbReference>
<dbReference type="PROSITE" id="PS00610">
    <property type="entry name" value="NA_NEUROTRAN_SYMP_1"/>
    <property type="match status" value="1"/>
</dbReference>
<dbReference type="PROSITE" id="PS00754">
    <property type="entry name" value="NA_NEUROTRAN_SYMP_2"/>
    <property type="match status" value="1"/>
</dbReference>
<dbReference type="PROSITE" id="PS50267">
    <property type="entry name" value="NA_NEUROTRAN_SYMP_3"/>
    <property type="match status" value="1"/>
</dbReference>
<evidence type="ECO:0000250" key="1">
    <source>
        <dbReference type="UniProtKB" id="P28571"/>
    </source>
</evidence>
<evidence type="ECO:0000250" key="2">
    <source>
        <dbReference type="UniProtKB" id="P28572"/>
    </source>
</evidence>
<evidence type="ECO:0000255" key="3"/>
<evidence type="ECO:0000256" key="4">
    <source>
        <dbReference type="SAM" id="MobiDB-lite"/>
    </source>
</evidence>
<evidence type="ECO:0000269" key="5">
    <source>
    </source>
</evidence>
<evidence type="ECO:0000269" key="6">
    <source>
    </source>
</evidence>
<evidence type="ECO:0000269" key="7">
    <source>
    </source>
</evidence>
<evidence type="ECO:0000303" key="8">
    <source>
    </source>
</evidence>
<evidence type="ECO:0000305" key="9"/>
<evidence type="ECO:0007744" key="10">
    <source>
    </source>
</evidence>
<evidence type="ECO:0007829" key="11">
    <source>
        <dbReference type="PDB" id="6ZBV"/>
    </source>
</evidence>
<evidence type="ECO:0007829" key="12">
    <source>
        <dbReference type="PDB" id="8WFI"/>
    </source>
</evidence>
<evidence type="ECO:0007829" key="13">
    <source>
        <dbReference type="PDB" id="8WFJ"/>
    </source>
</evidence>
<evidence type="ECO:0007829" key="14">
    <source>
        <dbReference type="PDB" id="8WFK"/>
    </source>
</evidence>
<evidence type="ECO:0007829" key="15">
    <source>
        <dbReference type="PDB" id="8WFL"/>
    </source>
</evidence>
<name>SC6A9_HUMAN</name>
<accession>P48067</accession>
<accession>A6NDH1</accession>
<accession>A6NII2</accession>
<accession>A6NNZ8</accession>
<accession>Q5TAB8</accession>
<accession>Q5TAB9</accession>
<accession>Q5TAC0</accession>
<comment type="function">
    <text evidence="1 7">Sodium- and chloride-dependent glycine transporter (PubMed:8183239). Essential for regulating glycine concentrations at inhibitory glycinergic synapses.</text>
</comment>
<comment type="function">
    <molecule>Isoform GlyT-1B</molecule>
    <text evidence="7">Sodium- and chloride-dependent glycine transporter.</text>
</comment>
<comment type="function">
    <molecule>Isoform GlyT-1C</molecule>
    <text evidence="7">Sodium- and chloride-dependent glycine transporter.</text>
</comment>
<comment type="catalytic activity">
    <molecule>Isoform GlyT-1B</molecule>
    <reaction evidence="7">
        <text>glycine(out) + chloride(out) + 2 Na(+)(out) = glycine(in) + chloride(in) + 2 Na(+)(in)</text>
        <dbReference type="Rhea" id="RHEA:70691"/>
        <dbReference type="ChEBI" id="CHEBI:17996"/>
        <dbReference type="ChEBI" id="CHEBI:29101"/>
        <dbReference type="ChEBI" id="CHEBI:57305"/>
    </reaction>
</comment>
<comment type="catalytic activity">
    <molecule>Isoform GlyT-1C</molecule>
    <reaction evidence="7">
        <text>glycine(out) + chloride(out) + 2 Na(+)(out) = glycine(in) + chloride(in) + 2 Na(+)(in)</text>
        <dbReference type="Rhea" id="RHEA:70691"/>
        <dbReference type="ChEBI" id="CHEBI:17996"/>
        <dbReference type="ChEBI" id="CHEBI:29101"/>
        <dbReference type="ChEBI" id="CHEBI:57305"/>
    </reaction>
</comment>
<comment type="activity regulation">
    <molecule>Isoform GlyT-1B</molecule>
    <text evidence="7">Inhibited by sarcosine.</text>
</comment>
<comment type="activity regulation">
    <molecule>Isoform GlyT-1C</molecule>
    <text evidence="7">Inhibited by sarcosine.</text>
</comment>
<comment type="biophysicochemical properties">
    <molecule>Isoform GlyT-1C</molecule>
    <kinetics>
        <KM evidence="7">90 uM for glycine</KM>
    </kinetics>
</comment>
<comment type="subunit">
    <text evidence="2">Interacts with EXOC1; interaction increases the transporter capacity of SLC6A9 probably by promoting its insertion into the cell membrane (By similarity). Interacts with EXOC3 and EXOC4 (By similarity).</text>
</comment>
<comment type="subcellular location">
    <subcellularLocation>
        <location evidence="2">Cell membrane</location>
        <topology evidence="3">Multi-pass membrane protein</topology>
    </subcellularLocation>
</comment>
<comment type="alternative products">
    <event type="alternative splicing"/>
    <isoform>
        <id>P48067-1</id>
        <name>GlyT-1C</name>
        <sequence type="displayed"/>
    </isoform>
    <isoform>
        <id>P48067-2</id>
        <name>GlyT-1A</name>
        <sequence type="described" ref="VSP_006270"/>
    </isoform>
    <isoform>
        <id>P48067-3</id>
        <name>GlyT-1B</name>
        <sequence type="described" ref="VSP_006271"/>
    </isoform>
</comment>
<comment type="tissue specificity">
    <molecule>Isoform GlyT-1A</molecule>
    <text evidence="7">Expressed in the brain, kidney, pancreas, lung, placenta and liver.</text>
</comment>
<comment type="tissue specificity">
    <molecule>Isoform GlyT-1B</molecule>
    <text evidence="7">Expressed in the brain, kidney, pancreas, lung, placenta and liver.</text>
</comment>
<comment type="tissue specificity">
    <molecule>Isoform GlyT-1C</molecule>
    <text evidence="7">Expressed only in the brain.</text>
</comment>
<comment type="disease" evidence="5 6">
    <disease id="DI-04929">
        <name>Glycine encephalopathy with normal serum glycine</name>
        <acronym>GCENSG</acronym>
        <description>An autosomal recessive, severe metabolic disorder characterized by arthrogryposis multiplex congenita, joint hyperlaxity, lack of neonatal respiratory effort, axial hypotonia, hypertonia with pronounced clonus, and delayed psychomotor development. Some patients may have dysmorphic facial features and/or brain imaging abnormalities. Laboratory studies show increased CSF glycine and normal or only mildly increased serum glycine. Most patients die in infancy.</description>
        <dbReference type="MIM" id="617301"/>
    </disease>
    <text>The disease is caused by variants affecting the gene represented in this entry.</text>
</comment>
<comment type="similarity">
    <text evidence="9">Belongs to the sodium:neurotransmitter symporter (SNF) (TC 2.A.22) family. SLC6A9 subfamily.</text>
</comment>
<comment type="sequence caution" evidence="9">
    <conflict type="frameshift">
        <sequence resource="EMBL-CDS" id="AAB30784"/>
    </conflict>
</comment>
<comment type="sequence caution" evidence="9">
    <conflict type="frameshift">
        <sequence resource="EMBL-CDS" id="AAB30785"/>
    </conflict>
</comment>
<reference key="1">
    <citation type="journal article" date="1994" name="Mol. Pharmacol.">
        <title>Cloning of the human glycine transporter type 1: molecular and pharmacological characterization of novel isoform variants and chromosomal localization of the gene in the human and mouse genomes.</title>
        <authorList>
            <person name="Kim K.-M."/>
            <person name="Kingsmore S.F."/>
            <person name="Han H."/>
            <person name="Yang-Feng T.L."/>
            <person name="Godinot N."/>
            <person name="Seldin M.F."/>
            <person name="Caron M.G."/>
            <person name="Giros B."/>
        </authorList>
    </citation>
    <scope>NUCLEOTIDE SEQUENCE [MRNA] (ISOFORMS GLYT-1A; GLYT-1B AND GLYT-1C)</scope>
    <scope>FUNCTION (ISOFORMS GLYT-1B AND GLYT-1C)</scope>
    <scope>TRANSPORTER ACTIVITY (ISOFORMS GLYT-1B AND GLYT-1C)</scope>
    <scope>BIOPHYSICOCHEMICAL PROPERTIES (ISOFORMS GLYT-1B AND GLYT-1C)</scope>
    <scope>ACTIVITY REGULATION (ISOFORMS GLYT-1B AND GLYT-1C)</scope>
    <scope>TISSUE SPECIFICITY (ISOFORMS GLYT-1A; GLYT-1B AND GLYT-1C)</scope>
    <source>
        <tissue>Brain</tissue>
    </source>
</reference>
<reference key="2">
    <citation type="journal article" date="2006" name="Nature">
        <title>The DNA sequence and biological annotation of human chromosome 1.</title>
        <authorList>
            <person name="Gregory S.G."/>
            <person name="Barlow K.F."/>
            <person name="McLay K.E."/>
            <person name="Kaul R."/>
            <person name="Swarbreck D."/>
            <person name="Dunham A."/>
            <person name="Scott C.E."/>
            <person name="Howe K.L."/>
            <person name="Woodfine K."/>
            <person name="Spencer C.C.A."/>
            <person name="Jones M.C."/>
            <person name="Gillson C."/>
            <person name="Searle S."/>
            <person name="Zhou Y."/>
            <person name="Kokocinski F."/>
            <person name="McDonald L."/>
            <person name="Evans R."/>
            <person name="Phillips K."/>
            <person name="Atkinson A."/>
            <person name="Cooper R."/>
            <person name="Jones C."/>
            <person name="Hall R.E."/>
            <person name="Andrews T.D."/>
            <person name="Lloyd C."/>
            <person name="Ainscough R."/>
            <person name="Almeida J.P."/>
            <person name="Ambrose K.D."/>
            <person name="Anderson F."/>
            <person name="Andrew R.W."/>
            <person name="Ashwell R.I.S."/>
            <person name="Aubin K."/>
            <person name="Babbage A.K."/>
            <person name="Bagguley C.L."/>
            <person name="Bailey J."/>
            <person name="Beasley H."/>
            <person name="Bethel G."/>
            <person name="Bird C.P."/>
            <person name="Bray-Allen S."/>
            <person name="Brown J.Y."/>
            <person name="Brown A.J."/>
            <person name="Buckley D."/>
            <person name="Burton J."/>
            <person name="Bye J."/>
            <person name="Carder C."/>
            <person name="Chapman J.C."/>
            <person name="Clark S.Y."/>
            <person name="Clarke G."/>
            <person name="Clee C."/>
            <person name="Cobley V."/>
            <person name="Collier R.E."/>
            <person name="Corby N."/>
            <person name="Coville G.J."/>
            <person name="Davies J."/>
            <person name="Deadman R."/>
            <person name="Dunn M."/>
            <person name="Earthrowl M."/>
            <person name="Ellington A.G."/>
            <person name="Errington H."/>
            <person name="Frankish A."/>
            <person name="Frankland J."/>
            <person name="French L."/>
            <person name="Garner P."/>
            <person name="Garnett J."/>
            <person name="Gay L."/>
            <person name="Ghori M.R.J."/>
            <person name="Gibson R."/>
            <person name="Gilby L.M."/>
            <person name="Gillett W."/>
            <person name="Glithero R.J."/>
            <person name="Grafham D.V."/>
            <person name="Griffiths C."/>
            <person name="Griffiths-Jones S."/>
            <person name="Grocock R."/>
            <person name="Hammond S."/>
            <person name="Harrison E.S.I."/>
            <person name="Hart E."/>
            <person name="Haugen E."/>
            <person name="Heath P.D."/>
            <person name="Holmes S."/>
            <person name="Holt K."/>
            <person name="Howden P.J."/>
            <person name="Hunt A.R."/>
            <person name="Hunt S.E."/>
            <person name="Hunter G."/>
            <person name="Isherwood J."/>
            <person name="James R."/>
            <person name="Johnson C."/>
            <person name="Johnson D."/>
            <person name="Joy A."/>
            <person name="Kay M."/>
            <person name="Kershaw J.K."/>
            <person name="Kibukawa M."/>
            <person name="Kimberley A.M."/>
            <person name="King A."/>
            <person name="Knights A.J."/>
            <person name="Lad H."/>
            <person name="Laird G."/>
            <person name="Lawlor S."/>
            <person name="Leongamornlert D.A."/>
            <person name="Lloyd D.M."/>
            <person name="Loveland J."/>
            <person name="Lovell J."/>
            <person name="Lush M.J."/>
            <person name="Lyne R."/>
            <person name="Martin S."/>
            <person name="Mashreghi-Mohammadi M."/>
            <person name="Matthews L."/>
            <person name="Matthews N.S.W."/>
            <person name="McLaren S."/>
            <person name="Milne S."/>
            <person name="Mistry S."/>
            <person name="Moore M.J.F."/>
            <person name="Nickerson T."/>
            <person name="O'Dell C.N."/>
            <person name="Oliver K."/>
            <person name="Palmeiri A."/>
            <person name="Palmer S.A."/>
            <person name="Parker A."/>
            <person name="Patel D."/>
            <person name="Pearce A.V."/>
            <person name="Peck A.I."/>
            <person name="Pelan S."/>
            <person name="Phelps K."/>
            <person name="Phillimore B.J."/>
            <person name="Plumb R."/>
            <person name="Rajan J."/>
            <person name="Raymond C."/>
            <person name="Rouse G."/>
            <person name="Saenphimmachak C."/>
            <person name="Sehra H.K."/>
            <person name="Sheridan E."/>
            <person name="Shownkeen R."/>
            <person name="Sims S."/>
            <person name="Skuce C.D."/>
            <person name="Smith M."/>
            <person name="Steward C."/>
            <person name="Subramanian S."/>
            <person name="Sycamore N."/>
            <person name="Tracey A."/>
            <person name="Tromans A."/>
            <person name="Van Helmond Z."/>
            <person name="Wall M."/>
            <person name="Wallis J.M."/>
            <person name="White S."/>
            <person name="Whitehead S.L."/>
            <person name="Wilkinson J.E."/>
            <person name="Willey D.L."/>
            <person name="Williams H."/>
            <person name="Wilming L."/>
            <person name="Wray P.W."/>
            <person name="Wu Z."/>
            <person name="Coulson A."/>
            <person name="Vaudin M."/>
            <person name="Sulston J.E."/>
            <person name="Durbin R.M."/>
            <person name="Hubbard T."/>
            <person name="Wooster R."/>
            <person name="Dunham I."/>
            <person name="Carter N.P."/>
            <person name="McVean G."/>
            <person name="Ross M.T."/>
            <person name="Harrow J."/>
            <person name="Olson M.V."/>
            <person name="Beck S."/>
            <person name="Rogers J."/>
            <person name="Bentley D.R."/>
        </authorList>
    </citation>
    <scope>NUCLEOTIDE SEQUENCE [LARGE SCALE GENOMIC DNA]</scope>
</reference>
<reference key="3">
    <citation type="submission" date="2005-09" db="EMBL/GenBank/DDBJ databases">
        <authorList>
            <person name="Mural R.J."/>
            <person name="Istrail S."/>
            <person name="Sutton G.G."/>
            <person name="Florea L."/>
            <person name="Halpern A.L."/>
            <person name="Mobarry C.M."/>
            <person name="Lippert R."/>
            <person name="Walenz B."/>
            <person name="Shatkay H."/>
            <person name="Dew I."/>
            <person name="Miller J.R."/>
            <person name="Flanigan M.J."/>
            <person name="Edwards N.J."/>
            <person name="Bolanos R."/>
            <person name="Fasulo D."/>
            <person name="Halldorsson B.V."/>
            <person name="Hannenhalli S."/>
            <person name="Turner R."/>
            <person name="Yooseph S."/>
            <person name="Lu F."/>
            <person name="Nusskern D.R."/>
            <person name="Shue B.C."/>
            <person name="Zheng X.H."/>
            <person name="Zhong F."/>
            <person name="Delcher A.L."/>
            <person name="Huson D.H."/>
            <person name="Kravitz S.A."/>
            <person name="Mouchard L."/>
            <person name="Reinert K."/>
            <person name="Remington K.A."/>
            <person name="Clark A.G."/>
            <person name="Waterman M.S."/>
            <person name="Eichler E.E."/>
            <person name="Adams M.D."/>
            <person name="Hunkapiller M.W."/>
            <person name="Myers E.W."/>
            <person name="Venter J.C."/>
        </authorList>
    </citation>
    <scope>NUCLEOTIDE SEQUENCE [LARGE SCALE GENOMIC DNA]</scope>
</reference>
<reference key="4">
    <citation type="journal article" date="2013" name="J. Proteome Res.">
        <title>Toward a comprehensive characterization of a human cancer cell phosphoproteome.</title>
        <authorList>
            <person name="Zhou H."/>
            <person name="Di Palma S."/>
            <person name="Preisinger C."/>
            <person name="Peng M."/>
            <person name="Polat A.N."/>
            <person name="Heck A.J."/>
            <person name="Mohammed S."/>
        </authorList>
    </citation>
    <scope>PHOSPHORYLATION [LARGE SCALE ANALYSIS] AT SER-698</scope>
    <scope>IDENTIFICATION BY MASS SPECTROMETRY [LARGE SCALE ANALYSIS]</scope>
    <source>
        <tissue>Erythroleukemia</tissue>
    </source>
</reference>
<reference key="5">
    <citation type="journal article" date="2016" name="Am. J. Hum. Genet.">
        <title>Loss of Glycine Transporter 1 Causes a Subtype of Glycine Encephalopathy with Arthrogryposis and Mildly Elevated Cerebrospinal Fluid Glycine.</title>
        <authorList>
            <person name="Kurolap A."/>
            <person name="Armbruster A."/>
            <person name="Hershkovitz T."/>
            <person name="Hauf K."/>
            <person name="Mory A."/>
            <person name="Paperna T."/>
            <person name="Hannappel E."/>
            <person name="Tal G."/>
            <person name="Nijem Y."/>
            <person name="Sella E."/>
            <person name="Mahajnah M."/>
            <person name="Ilivitzki A."/>
            <person name="Hershkovitz D."/>
            <person name="Ekhilevitch N."/>
            <person name="Mandel H."/>
            <person name="Eulenburg V."/>
            <person name="Baris H.N."/>
        </authorList>
    </citation>
    <scope>INVOLVEMENT IN GCENSG</scope>
</reference>
<reference key="6">
    <citation type="journal article" date="2016" name="Hum. Genet.">
        <title>Mutation in SLC6A9 encoding a glycine transporter causes a novel form of non-ketotic hyperglycinemia in humans.</title>
        <authorList>
            <person name="Alfadhel M."/>
            <person name="Nashabat M."/>
            <person name="Qahtani H.A."/>
            <person name="Alfares A."/>
            <person name="Mutairi F.A."/>
            <person name="Shaalan H.A."/>
            <person name="Douglas G.V."/>
            <person name="Wierenga K."/>
            <person name="Juusola J."/>
            <person name="Alrifai M.T."/>
            <person name="Arold S.T."/>
            <person name="Alkuraya F."/>
            <person name="Ali Q.A."/>
        </authorList>
    </citation>
    <scope>VARIANT GCENSG GLY-407</scope>
    <scope>INVOLVEMENT IN GCENSG</scope>
</reference>
<keyword id="KW-0002">3D-structure</keyword>
<keyword id="KW-0025">Alternative splicing</keyword>
<keyword id="KW-0029">Amino-acid transport</keyword>
<keyword id="KW-1003">Cell membrane</keyword>
<keyword id="KW-0225">Disease variant</keyword>
<keyword id="KW-0472">Membrane</keyword>
<keyword id="KW-0532">Neurotransmitter transport</keyword>
<keyword id="KW-0597">Phosphoprotein</keyword>
<keyword id="KW-1267">Proteomics identification</keyword>
<keyword id="KW-1185">Reference proteome</keyword>
<keyword id="KW-0769">Symport</keyword>
<keyword id="KW-0812">Transmembrane</keyword>
<keyword id="KW-1133">Transmembrane helix</keyword>
<keyword id="KW-0813">Transport</keyword>